<gene>
    <name evidence="2" type="primary">groEL</name>
    <name evidence="2" type="synonym">groL</name>
    <name type="ordered locus">SE_1629</name>
</gene>
<organism>
    <name type="scientific">Staphylococcus epidermidis (strain ATCC 12228 / FDA PCI 1200)</name>
    <dbReference type="NCBI Taxonomy" id="176280"/>
    <lineage>
        <taxon>Bacteria</taxon>
        <taxon>Bacillati</taxon>
        <taxon>Bacillota</taxon>
        <taxon>Bacilli</taxon>
        <taxon>Bacillales</taxon>
        <taxon>Staphylococcaceae</taxon>
        <taxon>Staphylococcus</taxon>
    </lineage>
</organism>
<dbReference type="EC" id="5.6.1.7" evidence="2"/>
<dbReference type="EMBL" id="AE015929">
    <property type="protein sequence ID" value="AAO05228.1"/>
    <property type="molecule type" value="Genomic_DNA"/>
</dbReference>
<dbReference type="RefSeq" id="NP_765184.1">
    <property type="nucleotide sequence ID" value="NC_004461.1"/>
</dbReference>
<dbReference type="RefSeq" id="WP_001830447.1">
    <property type="nucleotide sequence ID" value="NZ_WBME01000022.1"/>
</dbReference>
<dbReference type="SMR" id="P0C0N7"/>
<dbReference type="GeneID" id="50018271"/>
<dbReference type="KEGG" id="sep:SE_1629"/>
<dbReference type="PATRIC" id="fig|176280.10.peg.1595"/>
<dbReference type="eggNOG" id="COG0459">
    <property type="taxonomic scope" value="Bacteria"/>
</dbReference>
<dbReference type="HOGENOM" id="CLU_016503_3_0_9"/>
<dbReference type="OrthoDB" id="9766614at2"/>
<dbReference type="Proteomes" id="UP000001411">
    <property type="component" value="Chromosome"/>
</dbReference>
<dbReference type="GO" id="GO:0005737">
    <property type="term" value="C:cytoplasm"/>
    <property type="evidence" value="ECO:0007669"/>
    <property type="project" value="UniProtKB-SubCell"/>
</dbReference>
<dbReference type="GO" id="GO:0005524">
    <property type="term" value="F:ATP binding"/>
    <property type="evidence" value="ECO:0007669"/>
    <property type="project" value="UniProtKB-UniRule"/>
</dbReference>
<dbReference type="GO" id="GO:0140662">
    <property type="term" value="F:ATP-dependent protein folding chaperone"/>
    <property type="evidence" value="ECO:0007669"/>
    <property type="project" value="InterPro"/>
</dbReference>
<dbReference type="GO" id="GO:0016853">
    <property type="term" value="F:isomerase activity"/>
    <property type="evidence" value="ECO:0007669"/>
    <property type="project" value="UniProtKB-KW"/>
</dbReference>
<dbReference type="GO" id="GO:0051082">
    <property type="term" value="F:unfolded protein binding"/>
    <property type="evidence" value="ECO:0007669"/>
    <property type="project" value="UniProtKB-UniRule"/>
</dbReference>
<dbReference type="GO" id="GO:0042026">
    <property type="term" value="P:protein refolding"/>
    <property type="evidence" value="ECO:0007669"/>
    <property type="project" value="UniProtKB-UniRule"/>
</dbReference>
<dbReference type="CDD" id="cd03344">
    <property type="entry name" value="GroEL"/>
    <property type="match status" value="1"/>
</dbReference>
<dbReference type="FunFam" id="3.50.7.10:FF:000001">
    <property type="entry name" value="60 kDa chaperonin"/>
    <property type="match status" value="1"/>
</dbReference>
<dbReference type="Gene3D" id="3.50.7.10">
    <property type="entry name" value="GroEL"/>
    <property type="match status" value="1"/>
</dbReference>
<dbReference type="Gene3D" id="1.10.560.10">
    <property type="entry name" value="GroEL-like equatorial domain"/>
    <property type="match status" value="1"/>
</dbReference>
<dbReference type="Gene3D" id="3.30.260.10">
    <property type="entry name" value="TCP-1-like chaperonin intermediate domain"/>
    <property type="match status" value="1"/>
</dbReference>
<dbReference type="HAMAP" id="MF_00600">
    <property type="entry name" value="CH60"/>
    <property type="match status" value="1"/>
</dbReference>
<dbReference type="InterPro" id="IPR018370">
    <property type="entry name" value="Chaperonin_Cpn60_CS"/>
</dbReference>
<dbReference type="InterPro" id="IPR001844">
    <property type="entry name" value="Cpn60/GroEL"/>
</dbReference>
<dbReference type="InterPro" id="IPR002423">
    <property type="entry name" value="Cpn60/GroEL/TCP-1"/>
</dbReference>
<dbReference type="InterPro" id="IPR027409">
    <property type="entry name" value="GroEL-like_apical_dom_sf"/>
</dbReference>
<dbReference type="InterPro" id="IPR027413">
    <property type="entry name" value="GROEL-like_equatorial_sf"/>
</dbReference>
<dbReference type="InterPro" id="IPR027410">
    <property type="entry name" value="TCP-1-like_intermed_sf"/>
</dbReference>
<dbReference type="NCBIfam" id="TIGR02348">
    <property type="entry name" value="GroEL"/>
    <property type="match status" value="1"/>
</dbReference>
<dbReference type="NCBIfam" id="NF000592">
    <property type="entry name" value="PRK00013.1"/>
    <property type="match status" value="1"/>
</dbReference>
<dbReference type="NCBIfam" id="NF009487">
    <property type="entry name" value="PRK12849.1"/>
    <property type="match status" value="1"/>
</dbReference>
<dbReference type="NCBIfam" id="NF009488">
    <property type="entry name" value="PRK12850.1"/>
    <property type="match status" value="1"/>
</dbReference>
<dbReference type="NCBIfam" id="NF009489">
    <property type="entry name" value="PRK12851.1"/>
    <property type="match status" value="1"/>
</dbReference>
<dbReference type="PANTHER" id="PTHR45633">
    <property type="entry name" value="60 KDA HEAT SHOCK PROTEIN, MITOCHONDRIAL"/>
    <property type="match status" value="1"/>
</dbReference>
<dbReference type="Pfam" id="PF00118">
    <property type="entry name" value="Cpn60_TCP1"/>
    <property type="match status" value="1"/>
</dbReference>
<dbReference type="PRINTS" id="PR00298">
    <property type="entry name" value="CHAPERONIN60"/>
</dbReference>
<dbReference type="SUPFAM" id="SSF52029">
    <property type="entry name" value="GroEL apical domain-like"/>
    <property type="match status" value="1"/>
</dbReference>
<dbReference type="SUPFAM" id="SSF48592">
    <property type="entry name" value="GroEL equatorial domain-like"/>
    <property type="match status" value="1"/>
</dbReference>
<dbReference type="SUPFAM" id="SSF54849">
    <property type="entry name" value="GroEL-intermediate domain like"/>
    <property type="match status" value="1"/>
</dbReference>
<dbReference type="PROSITE" id="PS00296">
    <property type="entry name" value="CHAPERONINS_CPN60"/>
    <property type="match status" value="1"/>
</dbReference>
<keyword id="KW-0067">ATP-binding</keyword>
<keyword id="KW-0143">Chaperone</keyword>
<keyword id="KW-0963">Cytoplasm</keyword>
<keyword id="KW-0413">Isomerase</keyword>
<keyword id="KW-0547">Nucleotide-binding</keyword>
<keyword id="KW-0346">Stress response</keyword>
<evidence type="ECO:0000250" key="1"/>
<evidence type="ECO:0000255" key="2">
    <source>
        <dbReference type="HAMAP-Rule" id="MF_00600"/>
    </source>
</evidence>
<proteinExistence type="inferred from homology"/>
<reference key="1">
    <citation type="journal article" date="2003" name="Mol. Microbiol.">
        <title>Genome-based analysis of virulence genes in a non-biofilm-forming Staphylococcus epidermidis strain (ATCC 12228).</title>
        <authorList>
            <person name="Zhang Y.-Q."/>
            <person name="Ren S.-X."/>
            <person name="Li H.-L."/>
            <person name="Wang Y.-X."/>
            <person name="Fu G."/>
            <person name="Yang J."/>
            <person name="Qin Z.-Q."/>
            <person name="Miao Y.-G."/>
            <person name="Wang W.-Y."/>
            <person name="Chen R.-S."/>
            <person name="Shen Y."/>
            <person name="Chen Z."/>
            <person name="Yuan Z.-H."/>
            <person name="Zhao G.-P."/>
            <person name="Qu D."/>
            <person name="Danchin A."/>
            <person name="Wen Y.-M."/>
        </authorList>
    </citation>
    <scope>NUCLEOTIDE SEQUENCE [LARGE SCALE GENOMIC DNA]</scope>
    <source>
        <strain>ATCC 12228 / FDA PCI 1200</strain>
    </source>
</reference>
<sequence>MAKDLKFSEDARQAMLRGVDKLANAVKVTIGPKGRNVVLDKDYTTPLITNDGVTIAKEIELEDPYENMGAKLVQEVANKTNEIAGDGTTTATVLAQSMIQEGLKNVTSGANPVGLRQGIDKAVQVAIEALHEISQKVENKNEIAQVGAISAADEEIGRYISEAMDKVGNDGVITIEESNGFNTELEVVEGMQFDRGYQSPYMVTDSDKMIAELERPYILVTDKKISSFQDILPLLEQVVQASRPILIVADEVEGDALTNIVLNRMRGTFTAVAVKAPGFGDRRKAMLEDLAILTGAQVITDDLGLELKDASLDMLGTANKVEVTKDHTTVVDGNGDENNIDARVGQIKAQIEETDSEFDKEKLQERLAKLAGGVAVIKVGAASETELKERKLRIEDALNSTRAAVEEGIVAGGGTALVNIYQKVSEIKAEGDVETGVNIVLKALQAPVRQIAENAGLEGSIIVERLKHAEAGVGFNAATNEWVNMLEEGIVDPTKVTRSALQHAASVAAMFLTTEAVVASIPEPENNEQPGMGGMPGMM</sequence>
<name>CH60_STAES</name>
<feature type="initiator methionine" description="Removed" evidence="1">
    <location>
        <position position="1"/>
    </location>
</feature>
<feature type="chain" id="PRO_0000063539" description="Chaperonin GroEL">
    <location>
        <begin position="2"/>
        <end position="539"/>
    </location>
</feature>
<feature type="binding site" evidence="2">
    <location>
        <begin position="29"/>
        <end position="32"/>
    </location>
    <ligand>
        <name>ATP</name>
        <dbReference type="ChEBI" id="CHEBI:30616"/>
    </ligand>
</feature>
<feature type="binding site" evidence="2">
    <location>
        <begin position="86"/>
        <end position="90"/>
    </location>
    <ligand>
        <name>ATP</name>
        <dbReference type="ChEBI" id="CHEBI:30616"/>
    </ligand>
</feature>
<feature type="binding site" evidence="2">
    <location>
        <position position="413"/>
    </location>
    <ligand>
        <name>ATP</name>
        <dbReference type="ChEBI" id="CHEBI:30616"/>
    </ligand>
</feature>
<feature type="binding site" evidence="2">
    <location>
        <begin position="476"/>
        <end position="478"/>
    </location>
    <ligand>
        <name>ATP</name>
        <dbReference type="ChEBI" id="CHEBI:30616"/>
    </ligand>
</feature>
<feature type="binding site" evidence="2">
    <location>
        <position position="492"/>
    </location>
    <ligand>
        <name>ATP</name>
        <dbReference type="ChEBI" id="CHEBI:30616"/>
    </ligand>
</feature>
<comment type="function">
    <text evidence="2">Together with its co-chaperonin GroES, plays an essential role in assisting protein folding. The GroEL-GroES system forms a nano-cage that allows encapsulation of the non-native substrate proteins and provides a physical environment optimized to promote and accelerate protein folding.</text>
</comment>
<comment type="catalytic activity">
    <reaction evidence="2">
        <text>ATP + H2O + a folded polypeptide = ADP + phosphate + an unfolded polypeptide.</text>
        <dbReference type="EC" id="5.6.1.7"/>
    </reaction>
</comment>
<comment type="subunit">
    <text evidence="2">Forms a cylinder of 14 subunits composed of two heptameric rings stacked back-to-back. Interacts with the co-chaperonin GroES.</text>
</comment>
<comment type="subcellular location">
    <subcellularLocation>
        <location evidence="2">Cytoplasm</location>
    </subcellularLocation>
</comment>
<comment type="similarity">
    <text evidence="2">Belongs to the chaperonin (HSP60) family.</text>
</comment>
<accession>P0C0N7</accession>
<accession>P48218</accession>
<protein>
    <recommendedName>
        <fullName evidence="2">Chaperonin GroEL</fullName>
        <ecNumber evidence="2">5.6.1.7</ecNumber>
    </recommendedName>
    <alternativeName>
        <fullName evidence="2">60 kDa chaperonin</fullName>
    </alternativeName>
    <alternativeName>
        <fullName evidence="2">Chaperonin-60</fullName>
        <shortName evidence="2">Cpn60</shortName>
    </alternativeName>
    <alternativeName>
        <fullName>Heat shock protein 60</fullName>
    </alternativeName>
</protein>